<accession>A0A1A9TAK5</accession>
<accession>A0A1A9TAK3</accession>
<accession>A0A2H5AIZ2</accession>
<name>NR_NARPS</name>
<feature type="chain" id="PRO_0000450651" description="Noroxomaritidine/norcraugsodine reductase">
    <location>
        <begin position="1"/>
        <end position="257"/>
    </location>
</feature>
<feature type="active site" description="Proton acceptor" evidence="1">
    <location>
        <position position="161"/>
    </location>
</feature>
<feature type="binding site" evidence="2 7 8 9">
    <location>
        <begin position="20"/>
        <end position="23"/>
    </location>
    <ligand>
        <name>NADP(+)</name>
        <dbReference type="ChEBI" id="CHEBI:58349"/>
    </ligand>
</feature>
<feature type="binding site" evidence="2 7 8 9">
    <location>
        <begin position="42"/>
        <end position="43"/>
    </location>
    <ligand>
        <name>NADP(+)</name>
        <dbReference type="ChEBI" id="CHEBI:58349"/>
    </ligand>
</feature>
<feature type="binding site" evidence="2 7 8 9">
    <location>
        <begin position="68"/>
        <end position="69"/>
    </location>
    <ligand>
        <name>NADP(+)</name>
        <dbReference type="ChEBI" id="CHEBI:58349"/>
    </ligand>
</feature>
<feature type="binding site" evidence="2 7 8 9">
    <location>
        <begin position="96"/>
        <end position="98"/>
    </location>
    <ligand>
        <name>NADP(+)</name>
        <dbReference type="ChEBI" id="CHEBI:58349"/>
    </ligand>
</feature>
<feature type="binding site" evidence="2 8">
    <location>
        <position position="100"/>
    </location>
    <ligand>
        <name>substrate</name>
    </ligand>
</feature>
<feature type="binding site" evidence="2 8">
    <location>
        <position position="149"/>
    </location>
    <ligand>
        <name>substrate</name>
    </ligand>
</feature>
<feature type="binding site" evidence="2 7 8 9">
    <location>
        <position position="161"/>
    </location>
    <ligand>
        <name>NADP(+)</name>
        <dbReference type="ChEBI" id="CHEBI:58349"/>
    </ligand>
</feature>
<feature type="binding site" evidence="2 7 8 9">
    <location>
        <position position="165"/>
    </location>
    <ligand>
        <name>NADP(+)</name>
        <dbReference type="ChEBI" id="CHEBI:58349"/>
    </ligand>
</feature>
<feature type="binding site" evidence="2 7 8 9">
    <location>
        <begin position="194"/>
        <end position="199"/>
    </location>
    <ligand>
        <name>NADP(+)</name>
        <dbReference type="ChEBI" id="CHEBI:58349"/>
    </ligand>
</feature>
<feature type="splice variant" id="VSP_060653" description="In isoform 2.">
    <original>M</original>
    <variation>MASMTGGQQMGRGSM</variation>
    <location>
        <position position="1"/>
    </location>
</feature>
<feature type="sequence conflict" description="In Ref. 1; AUG71944." evidence="6" ref="1">
    <original>H</original>
    <variation>R</variation>
    <location>
        <position position="25"/>
    </location>
</feature>
<feature type="sequence conflict" description="In Ref. 1; AUG71944." evidence="6" ref="1">
    <original>E</original>
    <variation>D</variation>
    <location>
        <position position="81"/>
    </location>
</feature>
<feature type="sequence conflict" description="In Ref. 1; AUG71944." evidence="6" ref="1">
    <original>C</original>
    <variation>S</variation>
    <location>
        <position position="149"/>
    </location>
</feature>
<feature type="sequence conflict" description="In Ref. 1; AUG71944." evidence="6" ref="1">
    <original>SFVI</original>
    <variation>PFVN</variation>
    <location>
        <begin position="201"/>
        <end position="204"/>
    </location>
</feature>
<feature type="sequence conflict" description="In Ref. 1; AUG71944." evidence="6" ref="1">
    <original>F</original>
    <variation>S</variation>
    <location>
        <position position="218"/>
    </location>
</feature>
<feature type="sequence conflict" description="In Ref. 1; AUG71944." evidence="6" ref="1">
    <original>T</original>
    <variation>A</variation>
    <location>
        <position position="254"/>
    </location>
</feature>
<feature type="helix" evidence="11">
    <location>
        <begin position="3"/>
        <end position="6"/>
    </location>
</feature>
<feature type="strand" evidence="11">
    <location>
        <begin position="13"/>
        <end position="18"/>
    </location>
</feature>
<feature type="helix" evidence="11">
    <location>
        <begin position="22"/>
        <end position="33"/>
    </location>
</feature>
<feature type="strand" evidence="11">
    <location>
        <begin position="37"/>
        <end position="43"/>
    </location>
</feature>
<feature type="helix" evidence="11">
    <location>
        <begin position="45"/>
        <end position="57"/>
    </location>
</feature>
<feature type="strand" evidence="11">
    <location>
        <begin position="62"/>
        <end position="66"/>
    </location>
</feature>
<feature type="helix" evidence="11">
    <location>
        <begin position="72"/>
        <end position="85"/>
    </location>
</feature>
<feature type="turn" evidence="11">
    <location>
        <begin position="86"/>
        <end position="88"/>
    </location>
</feature>
<feature type="strand" evidence="11">
    <location>
        <begin position="91"/>
        <end position="95"/>
    </location>
</feature>
<feature type="helix" evidence="11">
    <location>
        <begin position="105"/>
        <end position="107"/>
    </location>
</feature>
<feature type="helix" evidence="11">
    <location>
        <begin position="110"/>
        <end position="120"/>
    </location>
</feature>
<feature type="helix" evidence="11">
    <location>
        <begin position="122"/>
        <end position="137"/>
    </location>
</feature>
<feature type="strand" evidence="11">
    <location>
        <begin position="139"/>
        <end position="146"/>
    </location>
</feature>
<feature type="helix" evidence="11">
    <location>
        <begin position="149"/>
        <end position="151"/>
    </location>
</feature>
<feature type="strand" evidence="10">
    <location>
        <begin position="152"/>
        <end position="154"/>
    </location>
</feature>
<feature type="helix" evidence="11">
    <location>
        <begin position="159"/>
        <end position="178"/>
    </location>
</feature>
<feature type="helix" evidence="11">
    <location>
        <begin position="180"/>
        <end position="182"/>
    </location>
</feature>
<feature type="strand" evidence="11">
    <location>
        <begin position="184"/>
        <end position="191"/>
    </location>
</feature>
<feature type="helix" evidence="11">
    <location>
        <begin position="197"/>
        <end position="199"/>
    </location>
</feature>
<feature type="helix" evidence="11">
    <location>
        <begin position="200"/>
        <end position="204"/>
    </location>
</feature>
<feature type="helix" evidence="11">
    <location>
        <begin position="206"/>
        <end position="213"/>
    </location>
</feature>
<feature type="helix" evidence="11">
    <location>
        <begin position="224"/>
        <end position="235"/>
    </location>
</feature>
<feature type="helix" evidence="11">
    <location>
        <begin position="237"/>
        <end position="239"/>
    </location>
</feature>
<feature type="strand" evidence="11">
    <location>
        <begin position="246"/>
        <end position="250"/>
    </location>
</feature>
<feature type="helix" evidence="11">
    <location>
        <begin position="253"/>
        <end position="255"/>
    </location>
</feature>
<comment type="function">
    <text evidence="2">In the Amaryllidaceae alkaloids biosynthesic pathway, catalyzes the conversion of noroxomaritidine to oxomaritidine, a precursor of haemanthamine- and crinamine-type alkaloids, promising anticancer agents (PubMed:27252378). Can also, to some extent, catalyze the condensation of 3,4-dihydroxybenzaldehyde (3,4-DHBA) and tyramine to produce norbelladine, and of isovanillin and tyramine to produce 4'-O-methylnorbelladine (PubMed:27252378).</text>
</comment>
<comment type="catalytic activity">
    <reaction evidence="2">
        <text>(10bR,4aS)-noroxomaritidine + NADPH + H(+) = (10bR,4aS)-oxomaritidine + NADP(+)</text>
        <dbReference type="Rhea" id="RHEA:63196"/>
        <dbReference type="ChEBI" id="CHEBI:15378"/>
        <dbReference type="ChEBI" id="CHEBI:57783"/>
        <dbReference type="ChEBI" id="CHEBI:58349"/>
        <dbReference type="ChEBI" id="CHEBI:133995"/>
        <dbReference type="ChEBI" id="CHEBI:146208"/>
    </reaction>
    <physiologicalReaction direction="left-to-right" evidence="2">
        <dbReference type="Rhea" id="RHEA:63197"/>
    </physiologicalReaction>
</comment>
<comment type="catalytic activity">
    <reaction evidence="2">
        <text>(10bS,4aR)-noroxomaritidine + NADPH + H(+) = (10bS,4aR)-oxomaritidine + NADP(+)</text>
        <dbReference type="Rhea" id="RHEA:63200"/>
        <dbReference type="ChEBI" id="CHEBI:15378"/>
        <dbReference type="ChEBI" id="CHEBI:57783"/>
        <dbReference type="ChEBI" id="CHEBI:58349"/>
        <dbReference type="ChEBI" id="CHEBI:133996"/>
        <dbReference type="ChEBI" id="CHEBI:146209"/>
    </reaction>
    <physiologicalReaction direction="left-to-right" evidence="2">
        <dbReference type="Rhea" id="RHEA:63201"/>
    </physiologicalReaction>
</comment>
<comment type="biophysicochemical properties">
    <phDependence>
        <text evidence="2">Optimum pH is 6.</text>
    </phDependence>
    <temperatureDependence>
        <text evidence="2">Optimum temperature is 35 degrees Celsius.</text>
    </temperatureDependence>
</comment>
<comment type="pathway">
    <text evidence="2 5">Alkaloid biosynthesis.</text>
</comment>
<comment type="alternative products">
    <event type="alternative splicing"/>
    <isoform>
        <id>A0A1A9TAK5-1</id>
        <name>1</name>
        <sequence type="displayed"/>
    </isoform>
    <isoform>
        <id>A0A1A9TAK5-2</id>
        <name>2</name>
        <sequence type="described" ref="VSP_060653"/>
    </isoform>
</comment>
<comment type="tissue specificity">
    <text evidence="3">Mostly expressed in stems, and, to a lower extent, in bulbs, roots and flowers.</text>
</comment>
<comment type="similarity">
    <text evidence="6">Belongs to the short-chain dehydrogenases/reductases (SDR) family. SDR65C subfamily.</text>
</comment>
<keyword id="KW-0002">3D-structure</keyword>
<keyword id="KW-0017">Alkaloid metabolism</keyword>
<keyword id="KW-0025">Alternative splicing</keyword>
<keyword id="KW-0521">NADP</keyword>
<keyword id="KW-0547">Nucleotide-binding</keyword>
<keyword id="KW-0560">Oxidoreductase</keyword>
<gene>
    <name evidence="4 5" type="primary">NR</name>
</gene>
<dbReference type="EC" id="1.1.1.-" evidence="2"/>
<dbReference type="EMBL" id="MF416099">
    <property type="protein sequence ID" value="AUG71944.1"/>
    <property type="molecule type" value="mRNA"/>
</dbReference>
<dbReference type="PDB" id="5FEU">
    <property type="method" value="X-ray"/>
    <property type="resolution" value="1.73 A"/>
    <property type="chains" value="A=1-257"/>
</dbReference>
<dbReference type="PDB" id="5FF9">
    <property type="method" value="X-ray"/>
    <property type="resolution" value="1.81 A"/>
    <property type="chains" value="A/B/C/D=1-257"/>
</dbReference>
<dbReference type="PDB" id="5FFF">
    <property type="method" value="X-ray"/>
    <property type="resolution" value="1.50 A"/>
    <property type="chains" value="A/B=1-257"/>
</dbReference>
<dbReference type="PDBsum" id="5FEU"/>
<dbReference type="PDBsum" id="5FF9"/>
<dbReference type="PDBsum" id="5FFF"/>
<dbReference type="SMR" id="A0A1A9TAK5"/>
<dbReference type="GO" id="GO:0000166">
    <property type="term" value="F:nucleotide binding"/>
    <property type="evidence" value="ECO:0007669"/>
    <property type="project" value="UniProtKB-KW"/>
</dbReference>
<dbReference type="GO" id="GO:0016491">
    <property type="term" value="F:oxidoreductase activity"/>
    <property type="evidence" value="ECO:0007669"/>
    <property type="project" value="UniProtKB-KW"/>
</dbReference>
<dbReference type="GO" id="GO:0009820">
    <property type="term" value="P:alkaloid metabolic process"/>
    <property type="evidence" value="ECO:0007669"/>
    <property type="project" value="UniProtKB-KW"/>
</dbReference>
<dbReference type="FunFam" id="3.40.50.720:FF:000084">
    <property type="entry name" value="Short-chain dehydrogenase reductase"/>
    <property type="match status" value="1"/>
</dbReference>
<dbReference type="Gene3D" id="3.40.50.720">
    <property type="entry name" value="NAD(P)-binding Rossmann-like Domain"/>
    <property type="match status" value="1"/>
</dbReference>
<dbReference type="InterPro" id="IPR036291">
    <property type="entry name" value="NAD(P)-bd_dom_sf"/>
</dbReference>
<dbReference type="InterPro" id="IPR020904">
    <property type="entry name" value="Sc_DH/Rdtase_CS"/>
</dbReference>
<dbReference type="InterPro" id="IPR002347">
    <property type="entry name" value="SDR_fam"/>
</dbReference>
<dbReference type="InterPro" id="IPR045000">
    <property type="entry name" value="TR"/>
</dbReference>
<dbReference type="PANTHER" id="PTHR42898:SF6">
    <property type="entry name" value="NADP-DEPENDENT MANNITOL DEHYDROGENASE"/>
    <property type="match status" value="1"/>
</dbReference>
<dbReference type="PANTHER" id="PTHR42898">
    <property type="entry name" value="TROPINONE REDUCTASE"/>
    <property type="match status" value="1"/>
</dbReference>
<dbReference type="Pfam" id="PF13561">
    <property type="entry name" value="adh_short_C2"/>
    <property type="match status" value="1"/>
</dbReference>
<dbReference type="PRINTS" id="PR00081">
    <property type="entry name" value="GDHRDH"/>
</dbReference>
<dbReference type="PRINTS" id="PR00080">
    <property type="entry name" value="SDRFAMILY"/>
</dbReference>
<dbReference type="SUPFAM" id="SSF51735">
    <property type="entry name" value="NAD(P)-binding Rossmann-fold domains"/>
    <property type="match status" value="1"/>
</dbReference>
<dbReference type="PROSITE" id="PS00061">
    <property type="entry name" value="ADH_SHORT"/>
    <property type="match status" value="1"/>
</dbReference>
<organism>
    <name type="scientific">Narcissus pseudonarcissus</name>
    <name type="common">Daffodil</name>
    <dbReference type="NCBI Taxonomy" id="39639"/>
    <lineage>
        <taxon>Eukaryota</taxon>
        <taxon>Viridiplantae</taxon>
        <taxon>Streptophyta</taxon>
        <taxon>Embryophyta</taxon>
        <taxon>Tracheophyta</taxon>
        <taxon>Spermatophyta</taxon>
        <taxon>Magnoliopsida</taxon>
        <taxon>Liliopsida</taxon>
        <taxon>Asparagales</taxon>
        <taxon>Amaryllidaceae</taxon>
        <taxon>Amaryllidoideae</taxon>
        <taxon>Narcissus</taxon>
    </lineage>
</organism>
<protein>
    <recommendedName>
        <fullName evidence="4 5">Noroxomaritidine/norcraugsodine reductase</fullName>
        <shortName evidence="5">NorRed</shortName>
        <ecNumber evidence="2">1.1.1.-</ecNumber>
    </recommendedName>
</protein>
<proteinExistence type="evidence at protein level"/>
<reference key="1">
    <citation type="journal article" date="2017" name="Sci. Rep.">
        <title>Transcriptome and metabolome profiling of Narcissus pseudonarcissus 'King Alfred' reveal components of Amaryllidaceae alkaloid metabolism.</title>
        <authorList>
            <person name="Singh A."/>
            <person name="Desgagne-Penix I."/>
        </authorList>
    </citation>
    <scope>NUCLEOTIDE SEQUENCE [MRNA]</scope>
    <scope>REVIEW ON THE AMARYLLIDACEAE ALKALOID METABOLISM</scope>
    <scope>PATHWAY</scope>
    <scope>TISSUE SPECIFICITY</scope>
    <scope>GENE FAMILY</scope>
    <scope>NOMENCLATURE</scope>
    <source>
        <strain>cv. King Alfred</strain>
        <tissue>Bulb</tissue>
    </source>
</reference>
<reference key="2">
    <citation type="journal article" date="2016" name="J. Biol. Chem.">
        <title>Identification of a noroxomaritidine reductase with amaryllidaceae alkaloid biosynthesis related activities.</title>
        <authorList>
            <person name="Kilgore M.B."/>
            <person name="Holland C.K."/>
            <person name="Jez J.M."/>
            <person name="Kutchan T.M."/>
        </authorList>
    </citation>
    <scope>X-RAY CRYSTALLOGRAPHY (1.50 ANGSTROMS) IN COMPLEX WITH NADP AND SUBSTRATE</scope>
    <scope>FUNCTION</scope>
    <scope>CATALYTIC ACTIVITY</scope>
    <scope>PATHWAY</scope>
    <scope>BIOPHYSICOCHEMICAL PROPERTIES</scope>
</reference>
<evidence type="ECO:0000255" key="1">
    <source>
        <dbReference type="PROSITE-ProRule" id="PRU10001"/>
    </source>
</evidence>
<evidence type="ECO:0000269" key="2">
    <source>
    </source>
</evidence>
<evidence type="ECO:0000269" key="3">
    <source>
    </source>
</evidence>
<evidence type="ECO:0000303" key="4">
    <source>
    </source>
</evidence>
<evidence type="ECO:0000303" key="5">
    <source>
    </source>
</evidence>
<evidence type="ECO:0000305" key="6"/>
<evidence type="ECO:0007744" key="7">
    <source>
        <dbReference type="PDB" id="5FEU"/>
    </source>
</evidence>
<evidence type="ECO:0007744" key="8">
    <source>
        <dbReference type="PDB" id="5FF9"/>
    </source>
</evidence>
<evidence type="ECO:0007744" key="9">
    <source>
        <dbReference type="PDB" id="5FFF"/>
    </source>
</evidence>
<evidence type="ECO:0007829" key="10">
    <source>
        <dbReference type="PDB" id="5FF9"/>
    </source>
</evidence>
<evidence type="ECO:0007829" key="11">
    <source>
        <dbReference type="PDB" id="5FFF"/>
    </source>
</evidence>
<sequence length="257" mass="27605">MSLEKRWSLEGTTALVTGGTKGIGHAIVEELVGFGARVYTCSRNEAELRKCLQEWENLKYDVTGSVCDVSSRTEREKLAEEVSSVFNGKLNILINNAGGYVNKPIDGFTAEDFSFLVAVNLESAFHLCQLAHPMLKASGTGSIVHISSCCAQIAIPGHSIYSSTKGAINQLTRNLACEWAKDNIRTNSIAPGAIRTPGTESFVIDKDALDREVSRVPFGRIGEPEEVASLAAFLCMPSASYITGQVICVDGGRTING</sequence>